<accession>A8H5C2</accession>
<feature type="chain" id="PRO_0000333132" description="Na(+)/H(+) antiporter NhaB">
    <location>
        <begin position="1"/>
        <end position="528"/>
    </location>
</feature>
<feature type="transmembrane region" description="Helical" evidence="1">
    <location>
        <begin position="20"/>
        <end position="39"/>
    </location>
</feature>
<feature type="transmembrane region" description="Helical" evidence="1">
    <location>
        <begin position="66"/>
        <end position="86"/>
    </location>
</feature>
<feature type="transmembrane region" description="Helical" evidence="1">
    <location>
        <begin position="97"/>
        <end position="117"/>
    </location>
</feature>
<feature type="transmembrane region" description="Helical" evidence="1">
    <location>
        <begin position="139"/>
        <end position="159"/>
    </location>
</feature>
<feature type="transmembrane region" description="Helical" evidence="1">
    <location>
        <begin position="241"/>
        <end position="261"/>
    </location>
</feature>
<feature type="transmembrane region" description="Helical" evidence="1">
    <location>
        <begin position="304"/>
        <end position="324"/>
    </location>
</feature>
<feature type="transmembrane region" description="Helical" evidence="1">
    <location>
        <begin position="349"/>
        <end position="369"/>
    </location>
</feature>
<feature type="transmembrane region" description="Helical" evidence="1">
    <location>
        <begin position="390"/>
        <end position="410"/>
    </location>
</feature>
<feature type="transmembrane region" description="Helical" evidence="1">
    <location>
        <begin position="448"/>
        <end position="468"/>
    </location>
</feature>
<feature type="transmembrane region" description="Helical" evidence="1">
    <location>
        <begin position="476"/>
        <end position="496"/>
    </location>
</feature>
<sequence>MPVTMSRAFLDNFLGNSPKWFKIAIISFLVINPIVFYFNPFVAGWLLVVEFIFTLAMALKCYPLQPGGLLAIEAVAIGMTSPSQVLHEIEANLEVVLLLVFMVAGIYFMKQLLLFVFTKMITKVRSKIYVSLLFCISSAFLSAFLDALTVIAVIITVAVGFYSIYHKVASGKTFGESHDHTSDGYPQLCEEELESFRGFLRNLLMHAGVGTALGGVCTMVGEPQNLIIAAQANWQFAEFAIRMSPVTVPVFFAGITTCFLVEKFKVFGYGQQLPDAVHKILSDYDAHEDANRTKHDKVKLLIQAVIGVWLIAGLALHLASVGLIGLSVIILATAFNGITNEHALGKAFEEALPFTALLAVFFAIVAVIIDQQLFAPVIQWALSYEGNTQLVIFYIANGLLSMVSDNVFVGTVYINEVKSALLNGQITRDQFDLLAVAINTGTNLPSVATPNGQAAFLFLLTSAIAPLIRLSYGRMVWMALPYTIVLSIVGVLAIQLGALEQMTQYFYDSQMLIHHSAQAAADGVVSSH</sequence>
<evidence type="ECO:0000255" key="1">
    <source>
        <dbReference type="HAMAP-Rule" id="MF_01599"/>
    </source>
</evidence>
<organism>
    <name type="scientific">Shewanella pealeana (strain ATCC 700345 / ANG-SQ1)</name>
    <dbReference type="NCBI Taxonomy" id="398579"/>
    <lineage>
        <taxon>Bacteria</taxon>
        <taxon>Pseudomonadati</taxon>
        <taxon>Pseudomonadota</taxon>
        <taxon>Gammaproteobacteria</taxon>
        <taxon>Alteromonadales</taxon>
        <taxon>Shewanellaceae</taxon>
        <taxon>Shewanella</taxon>
    </lineage>
</organism>
<dbReference type="EMBL" id="CP000851">
    <property type="protein sequence ID" value="ABV87759.1"/>
    <property type="molecule type" value="Genomic_DNA"/>
</dbReference>
<dbReference type="RefSeq" id="WP_012155671.1">
    <property type="nucleotide sequence ID" value="NC_009901.1"/>
</dbReference>
<dbReference type="SMR" id="A8H5C2"/>
<dbReference type="STRING" id="398579.Spea_2439"/>
<dbReference type="KEGG" id="spl:Spea_2439"/>
<dbReference type="eggNOG" id="COG3067">
    <property type="taxonomic scope" value="Bacteria"/>
</dbReference>
<dbReference type="HOGENOM" id="CLU_041110_0_0_6"/>
<dbReference type="OrthoDB" id="5288732at2"/>
<dbReference type="Proteomes" id="UP000002608">
    <property type="component" value="Chromosome"/>
</dbReference>
<dbReference type="GO" id="GO:0005886">
    <property type="term" value="C:plasma membrane"/>
    <property type="evidence" value="ECO:0007669"/>
    <property type="project" value="UniProtKB-SubCell"/>
</dbReference>
<dbReference type="GO" id="GO:0015385">
    <property type="term" value="F:sodium:proton antiporter activity"/>
    <property type="evidence" value="ECO:0007669"/>
    <property type="project" value="InterPro"/>
</dbReference>
<dbReference type="HAMAP" id="MF_01599">
    <property type="entry name" value="NhaB"/>
    <property type="match status" value="1"/>
</dbReference>
<dbReference type="InterPro" id="IPR004671">
    <property type="entry name" value="Na+/H+_antiporter_NhaB"/>
</dbReference>
<dbReference type="NCBIfam" id="TIGR00774">
    <property type="entry name" value="NhaB"/>
    <property type="match status" value="1"/>
</dbReference>
<dbReference type="NCBIfam" id="NF007093">
    <property type="entry name" value="PRK09547.1"/>
    <property type="match status" value="1"/>
</dbReference>
<dbReference type="PANTHER" id="PTHR43302:SF1">
    <property type="entry name" value="NA(+)_H(+) ANTIPORTER NHAB"/>
    <property type="match status" value="1"/>
</dbReference>
<dbReference type="PANTHER" id="PTHR43302">
    <property type="entry name" value="TRANSPORTER ARSB-RELATED"/>
    <property type="match status" value="1"/>
</dbReference>
<dbReference type="Pfam" id="PF06450">
    <property type="entry name" value="NhaB"/>
    <property type="match status" value="1"/>
</dbReference>
<name>NHAB_SHEPA</name>
<protein>
    <recommendedName>
        <fullName evidence="1">Na(+)/H(+) antiporter NhaB</fullName>
    </recommendedName>
    <alternativeName>
        <fullName evidence="1">Sodium/proton antiporter NhaB</fullName>
    </alternativeName>
</protein>
<gene>
    <name evidence="1" type="primary">nhaB</name>
    <name type="ordered locus">Spea_2439</name>
</gene>
<proteinExistence type="inferred from homology"/>
<reference key="1">
    <citation type="submission" date="2007-10" db="EMBL/GenBank/DDBJ databases">
        <title>Complete sequence of Shewanella pealeana ATCC 700345.</title>
        <authorList>
            <consortium name="US DOE Joint Genome Institute"/>
            <person name="Copeland A."/>
            <person name="Lucas S."/>
            <person name="Lapidus A."/>
            <person name="Barry K."/>
            <person name="Glavina del Rio T."/>
            <person name="Dalin E."/>
            <person name="Tice H."/>
            <person name="Pitluck S."/>
            <person name="Chertkov O."/>
            <person name="Brettin T."/>
            <person name="Bruce D."/>
            <person name="Detter J.C."/>
            <person name="Han C."/>
            <person name="Schmutz J."/>
            <person name="Larimer F."/>
            <person name="Land M."/>
            <person name="Hauser L."/>
            <person name="Kyrpides N."/>
            <person name="Kim E."/>
            <person name="Zhao J.-S.Z."/>
            <person name="Manno D."/>
            <person name="Hawari J."/>
            <person name="Richardson P."/>
        </authorList>
    </citation>
    <scope>NUCLEOTIDE SEQUENCE [LARGE SCALE GENOMIC DNA]</scope>
    <source>
        <strain>ATCC 700345 / ANG-SQ1</strain>
    </source>
</reference>
<keyword id="KW-0050">Antiport</keyword>
<keyword id="KW-0997">Cell inner membrane</keyword>
<keyword id="KW-1003">Cell membrane</keyword>
<keyword id="KW-0406">Ion transport</keyword>
<keyword id="KW-0472">Membrane</keyword>
<keyword id="KW-1185">Reference proteome</keyword>
<keyword id="KW-0915">Sodium</keyword>
<keyword id="KW-0739">Sodium transport</keyword>
<keyword id="KW-0812">Transmembrane</keyword>
<keyword id="KW-1133">Transmembrane helix</keyword>
<keyword id="KW-0813">Transport</keyword>
<comment type="function">
    <text evidence="1">Na(+)/H(+) antiporter that extrudes sodium in exchange for external protons.</text>
</comment>
<comment type="catalytic activity">
    <reaction evidence="1">
        <text>2 Na(+)(in) + 3 H(+)(out) = 2 Na(+)(out) + 3 H(+)(in)</text>
        <dbReference type="Rhea" id="RHEA:29247"/>
        <dbReference type="ChEBI" id="CHEBI:15378"/>
        <dbReference type="ChEBI" id="CHEBI:29101"/>
    </reaction>
    <physiologicalReaction direction="left-to-right" evidence="1">
        <dbReference type="Rhea" id="RHEA:29248"/>
    </physiologicalReaction>
</comment>
<comment type="subcellular location">
    <subcellularLocation>
        <location evidence="1">Cell inner membrane</location>
        <topology evidence="1">Multi-pass membrane protein</topology>
    </subcellularLocation>
</comment>
<comment type="similarity">
    <text evidence="1">Belongs to the NhaB Na(+)/H(+) (TC 2.A.34) antiporter family.</text>
</comment>